<feature type="signal peptide" evidence="1">
    <location>
        <begin position="1"/>
        <end position="24"/>
    </location>
</feature>
<feature type="propeptide" id="PRO_0000458407" description="Activation peptide" evidence="6">
    <location>
        <begin position="25"/>
        <end position="128"/>
    </location>
</feature>
<feature type="chain" id="PRO_0000458408" description="Protein neprosin" evidence="6">
    <location>
        <begin position="129"/>
        <end position="380"/>
    </location>
</feature>
<feature type="domain" description="Neprosin PEP catalytic" evidence="3">
    <location>
        <begin position="129"/>
        <end position="380"/>
    </location>
</feature>
<feature type="active site" evidence="3 6">
    <location>
        <position position="188"/>
    </location>
</feature>
<feature type="active site" evidence="3 6">
    <location>
        <position position="297"/>
    </location>
</feature>
<feature type="glycosylation site" description="N-linked (GlcNAc...) asparagine" evidence="2">
    <location>
        <position position="68"/>
    </location>
</feature>
<feature type="glycosylation site" description="N-linked (GlcNAc...) asparagine" evidence="2 6 10 11 12 13">
    <location>
        <position position="145"/>
    </location>
</feature>
<feature type="glycosylation site" description="N-linked (GlcNAc...) asparagine" evidence="2 6 10 11 12 13">
    <location>
        <position position="152"/>
    </location>
</feature>
<feature type="glycosylation site" description="N-linked (GlcNAc...) asparagine" evidence="2">
    <location>
        <position position="253"/>
    </location>
</feature>
<feature type="disulfide bond" evidence="6 10 11 12 13">
    <location>
        <begin position="52"/>
        <end position="98"/>
    </location>
</feature>
<feature type="disulfide bond" evidence="3 6 10 11 12 13">
    <location>
        <begin position="219"/>
        <end position="224"/>
    </location>
</feature>
<feature type="disulfide bond" evidence="3 6 10 11 12 13">
    <location>
        <begin position="358"/>
        <end position="379"/>
    </location>
</feature>
<feature type="mutagenesis site" description="No effect on activity." evidence="6">
    <original>K</original>
    <variation>A</variation>
    <location>
        <position position="118"/>
    </location>
</feature>
<feature type="mutagenesis site" description="Significant loss of activity." evidence="6">
    <original>H</original>
    <variation>A</variation>
    <location>
        <position position="134"/>
    </location>
</feature>
<feature type="mutagenesis site" description="Significant loss of activity." evidence="6">
    <original>Y</original>
    <variation>A</variation>
    <location>
        <position position="136"/>
    </location>
</feature>
<feature type="mutagenesis site" description="Abolishes activity." evidence="6">
    <original>Q</original>
    <variation>A</variation>
    <location>
        <position position="173"/>
    </location>
</feature>
<feature type="mutagenesis site" description="Abolishes activity." evidence="6">
    <original>W</original>
    <variation>A</variation>
    <location>
        <position position="175"/>
    </location>
</feature>
<feature type="mutagenesis site" description="Abolishes activity." evidence="6">
    <original>E</original>
    <variation>Q</variation>
    <location>
        <position position="188"/>
    </location>
</feature>
<feature type="mutagenesis site" description="Significant loss of activity." evidence="6">
    <original>Y</original>
    <variation>A</variation>
    <location>
        <position position="214"/>
    </location>
</feature>
<feature type="mutagenesis site" description="Almost complete loss of activity." evidence="6">
    <original>E</original>
    <variation>Q</variation>
    <location>
        <position position="297"/>
    </location>
</feature>
<protein>
    <recommendedName>
        <fullName evidence="7">Protein neprosin</fullName>
        <shortName evidence="7">Npr1</shortName>
        <ecNumber evidence="3 4 5 6">3.4.21.26</ecNumber>
    </recommendedName>
    <alternativeName>
        <fullName evidence="8">Prolyl endopeptidase</fullName>
    </alternativeName>
</protein>
<name>NEPRN_NEPVE</name>
<organism>
    <name type="scientific">Nepenthes x ventrata</name>
    <name type="common">Red tropical pitcher plant</name>
    <name type="synonym">Nepenthes ventricosa x Nepenthes alata</name>
    <dbReference type="NCBI Taxonomy" id="1744888"/>
    <lineage>
        <taxon>Eukaryota</taxon>
        <taxon>Viridiplantae</taxon>
        <taxon>Streptophyta</taxon>
        <taxon>Embryophyta</taxon>
        <taxon>Tracheophyta</taxon>
        <taxon>Spermatophyta</taxon>
        <taxon>Magnoliopsida</taxon>
        <taxon>eudicotyledons</taxon>
        <taxon>Gunneridae</taxon>
        <taxon>Pentapetalae</taxon>
        <taxon>Caryophyllales</taxon>
        <taxon>Nepenthaceae</taxon>
        <taxon>Nepenthes</taxon>
    </lineage>
</organism>
<reference evidence="9" key="1">
    <citation type="journal article" date="2016" name="Sci. Rep.">
        <title>Addressing proteolytic efficiency in enzymatic degradation therapy for celiac disease.</title>
        <authorList>
            <person name="Rey M."/>
            <person name="Yang M."/>
            <person name="Lee L."/>
            <person name="Zhang Y."/>
            <person name="Sheff J.G."/>
            <person name="Sensen C.W."/>
            <person name="Mrazek H."/>
            <person name="Halada P."/>
            <person name="Man P."/>
            <person name="McCarville J.L."/>
            <person name="Verdu E.F."/>
            <person name="Schriemer D.C."/>
        </authorList>
    </citation>
    <scope>NUCLEOTIDE SEQUENCE [MRNA]</scope>
    <scope>PROTEIN SEQUENCE OF 129-141; 157-171; 174-219; 225-233; 238-249; 253-267; 270-312 AND 329-369</scope>
    <scope>FUNCTION</scope>
    <scope>CATALYTIC ACTIVITY</scope>
    <scope>SUBCELLULAR LOCATION</scope>
    <scope>IDENTIFICATION BY MASS SPECTROMETRY</scope>
</reference>
<reference evidence="9" key="2">
    <citation type="journal article" date="2017" name="Mol. Cell. Proteomics">
        <title>Neprosin, a Selective Prolyl Endoprotease for Bottom-up Proteomics and Histone Mapping.</title>
        <authorList>
            <person name="Schraeder C.U."/>
            <person name="Lee L."/>
            <person name="Rey M."/>
            <person name="Sarpe V."/>
            <person name="Man P."/>
            <person name="Sharma S."/>
            <person name="Zabrouskov V."/>
            <person name="Larsen B."/>
            <person name="Schriemer D.C."/>
        </authorList>
    </citation>
    <scope>SYNTHESIS</scope>
    <scope>FUNCTION</scope>
    <scope>CATALYTIC ACTIVITY</scope>
    <scope>ACTIVITY REGULATION</scope>
    <scope>BIOPHYSICOCHEMICAL PROPERTIES</scope>
    <scope>BIOTECHNOLOGY</scope>
</reference>
<reference evidence="10 11 12 13" key="3">
    <citation type="journal article" date="2022" name="Nat. Commun.">
        <title>Molecular and in vivo studies of a glutamate-class prolyl-endopeptidase for coeliac disease therapy.</title>
        <authorList>
            <person name="Del Amo-Maestro L."/>
            <person name="Mendes S.R."/>
            <person name="Rodriguez-Banqueri A."/>
            <person name="Garzon-Flores L."/>
            <person name="Girbal M."/>
            <person name="Rodriguez-Lagunas M.J."/>
            <person name="Guevara T."/>
            <person name="Franch A."/>
            <person name="Perez-Cano F.J."/>
            <person name="Eckhard U."/>
            <person name="Gomis-Rueth F.X."/>
        </authorList>
    </citation>
    <scope>X-RAY CRYSTALLOGRAPHY (1.80 ANGSTROMS) OF 29-380</scope>
    <scope>PROTEIN SEQUENCE OF 129-132</scope>
    <scope>FUNCTION</scope>
    <scope>CATALYTIC ACTIVITY</scope>
    <scope>ACTIVITY REGULATION</scope>
    <scope>DISULFIDE BONDS</scope>
    <scope>ACTIVE SITES</scope>
    <scope>GLYCOSYLATION AT ASN-145 AND ASN-152</scope>
    <scope>MUTAGENESIS OF LYS-118; HIS-134; TYR-136; GLN-173; TRP-175; GLU-188; TYR-214 AND GLU-297</scope>
</reference>
<dbReference type="EC" id="3.4.21.26" evidence="3 4 5 6"/>
<dbReference type="PDB" id="7ZU8">
    <property type="method" value="X-ray"/>
    <property type="resolution" value="2.05 A"/>
    <property type="chains" value="A=29-380"/>
</dbReference>
<dbReference type="PDB" id="7ZVA">
    <property type="method" value="X-ray"/>
    <property type="resolution" value="1.80 A"/>
    <property type="chains" value="A=29-380"/>
</dbReference>
<dbReference type="PDB" id="7ZVB">
    <property type="method" value="X-ray"/>
    <property type="resolution" value="2.35 A"/>
    <property type="chains" value="A=132-380"/>
</dbReference>
<dbReference type="PDB" id="7ZVC">
    <property type="method" value="X-ray"/>
    <property type="resolution" value="1.85 A"/>
    <property type="chains" value="A=132-380"/>
</dbReference>
<dbReference type="PDBsum" id="7ZU8"/>
<dbReference type="PDBsum" id="7ZVA"/>
<dbReference type="PDBsum" id="7ZVB"/>
<dbReference type="PDBsum" id="7ZVC"/>
<dbReference type="SMR" id="C0HLV2"/>
<dbReference type="iPTMnet" id="C0HLV2"/>
<dbReference type="GO" id="GO:0005576">
    <property type="term" value="C:extracellular region"/>
    <property type="evidence" value="ECO:0000314"/>
    <property type="project" value="UniProtKB"/>
</dbReference>
<dbReference type="GO" id="GO:0004175">
    <property type="term" value="F:endopeptidase activity"/>
    <property type="evidence" value="ECO:0000314"/>
    <property type="project" value="UniProtKB"/>
</dbReference>
<dbReference type="GO" id="GO:0070012">
    <property type="term" value="F:oligopeptidase activity"/>
    <property type="evidence" value="ECO:0000314"/>
    <property type="project" value="UniProtKB"/>
</dbReference>
<dbReference type="GO" id="GO:0006508">
    <property type="term" value="P:proteolysis"/>
    <property type="evidence" value="ECO:0007669"/>
    <property type="project" value="UniProtKB-KW"/>
</dbReference>
<dbReference type="Gene3D" id="3.90.1320.10">
    <property type="entry name" value="Outer-capsid protein sigma 3, large lobe"/>
    <property type="match status" value="1"/>
</dbReference>
<dbReference type="InterPro" id="IPR053168">
    <property type="entry name" value="Glutamic_endopeptidase"/>
</dbReference>
<dbReference type="InterPro" id="IPR004314">
    <property type="entry name" value="Neprosin"/>
</dbReference>
<dbReference type="InterPro" id="IPR025521">
    <property type="entry name" value="Neprosin_propep"/>
</dbReference>
<dbReference type="PANTHER" id="PTHR31589:SF221">
    <property type="entry name" value="LIGASE, PUTATIVE (DUF239)-RELATED"/>
    <property type="match status" value="1"/>
</dbReference>
<dbReference type="PANTHER" id="PTHR31589">
    <property type="entry name" value="PROTEIN, PUTATIVE (DUF239)-RELATED-RELATED"/>
    <property type="match status" value="1"/>
</dbReference>
<dbReference type="Pfam" id="PF03080">
    <property type="entry name" value="Neprosin"/>
    <property type="match status" value="1"/>
</dbReference>
<dbReference type="Pfam" id="PF14365">
    <property type="entry name" value="Neprosin_AP"/>
    <property type="match status" value="1"/>
</dbReference>
<dbReference type="PROSITE" id="PS52045">
    <property type="entry name" value="NEPROSIN_PEP_CD"/>
    <property type="match status" value="1"/>
</dbReference>
<proteinExistence type="evidence at protein level"/>
<comment type="function">
    <text evidence="4 5 6">Glutamic endopeptidase that preferentially cleaves peptide bonds on the C-terminal side of proline residues (PubMed:27481162, PubMed:28404794, PubMed:35915115). Also cleaves peptide bonds on the C-terminal side of alanine residues but with less efficiency (PubMed:28404794). In contrast to most proline-cleaving enzymes, effectively degrades proteins of any size (PubMed:28404794). Found in the viscoelastic fluid of the pitcher, and so likely functions in the digestion of their prey (PubMed:27481162).</text>
</comment>
<comment type="catalytic activity">
    <reaction evidence="4 5 6">
        <text>Hydrolysis of Pro-|-Xaa &gt;&gt; Ala-|-Xaa in oligopeptides.</text>
        <dbReference type="EC" id="3.4.21.26"/>
    </reaction>
</comment>
<comment type="activity regulation">
    <text evidence="5 6">Weakly inhibited by the aspartic protease inhibitor pepstatin (PubMed:28404794). Weakly inhibited by pepstatin A (IC(50) of 140 uM) and 1,2-epoxy-3-(p-nitrophenoxy)propane (EPNP) (IC(50) of 480 uM) (PubMed:35915115). Activity is not affected by the POP inhibitor Z-Pro-prolinal inhibitor or the denaturant urea (PubMed:28404794).</text>
</comment>
<comment type="biophysicochemical properties">
    <kinetics>
        <KM evidence="6">2.36 M for fluorogenic FS6 peptide</KM>
        <KM evidence="6">2.74 M for fluorogenic FS6-QPQL peptide</KM>
        <text evidence="6">kcat is 1.81 sec(-1) for the cleavage of the fluorogenic FS6 peptide (PubMed:35915115). kcat is 6.55 sec(-1) for the cleavage of the fluorogenic FS6-QPQL peptide (PubMed:35915115).</text>
    </kinetics>
    <phDependence>
        <text evidence="5 6">Optimum pH is 2.5 (PubMed:28404794). At pH 4.5, the enzyme retains approximately 50% of its activity but it is almost completely inactivated at pH 8 (PubMed:28404794). Optimum pH is 3 with fluorescent bovine serum albumin (BSA) as substrate (PubMed:35915115).</text>
    </phDependence>
    <temperatureDependence>
        <text evidence="5">Optimum temperature is between 37-50 degrees Celsius.</text>
    </temperatureDependence>
</comment>
<comment type="subcellular location">
    <subcellularLocation>
        <location evidence="4">Secreted</location>
    </subcellularLocation>
    <text evidence="4">Secreted into the viscoelastic fluid of the pitcher.</text>
</comment>
<comment type="biotechnology">
    <text evidence="5">In the proteomics field, can be used for directed protein digestion for mass spectrometric analysis (PubMed:28404794). For example, can be used to study post-translational modifications in the N-terminal tails of histones (PubMed:28404794). In a single digest, efficiently cleaves histones, after 'Pro-32' for histone H4 and after 'Pro-38' in histone H3, which generates the N-terminal tails 1-32 and 1-38, respectively (PubMed:28404794). This generates convenient peptide lengths for retention and dispersion of modified H3 and H4 peptides and allows the simultaneous analysis of co-occurring post-translational modifications in these N-terminal tails (PubMed:28404794).</text>
</comment>
<comment type="similarity">
    <text evidence="9">Belongs to the peptidase G3 family.</text>
</comment>
<evidence type="ECO:0000255" key="1"/>
<evidence type="ECO:0000255" key="2">
    <source>
        <dbReference type="PROSITE-ProRule" id="PRU00498"/>
    </source>
</evidence>
<evidence type="ECO:0000255" key="3">
    <source>
        <dbReference type="PROSITE-ProRule" id="PRU01390"/>
    </source>
</evidence>
<evidence type="ECO:0000269" key="4">
    <source>
    </source>
</evidence>
<evidence type="ECO:0000269" key="5">
    <source>
    </source>
</evidence>
<evidence type="ECO:0000269" key="6">
    <source>
    </source>
</evidence>
<evidence type="ECO:0000303" key="7">
    <source>
    </source>
</evidence>
<evidence type="ECO:0000303" key="8">
    <source>
    </source>
</evidence>
<evidence type="ECO:0000305" key="9"/>
<evidence type="ECO:0007744" key="10">
    <source>
        <dbReference type="PDB" id="7ZU8"/>
    </source>
</evidence>
<evidence type="ECO:0007744" key="11">
    <source>
        <dbReference type="PDB" id="7ZVA"/>
    </source>
</evidence>
<evidence type="ECO:0007744" key="12">
    <source>
        <dbReference type="PDB" id="7ZVB"/>
    </source>
</evidence>
<evidence type="ECO:0007744" key="13">
    <source>
        <dbReference type="PDB" id="7ZVC"/>
    </source>
</evidence>
<accession>C0HLV2</accession>
<sequence length="380" mass="42025">MQAKFFTFVILSSVFYFNYPLAEARSIQARLANKPKGTIKTIKGDDGEVVDCVDIYKQPAFDHPLLKNHTLQMQPSSYASKVGEYNKLEQPWHKNGECPKGSIPIRRQVITGLPVVKKQFPNLKFAPPSANTNHQYAVIAYFYGNASLQGANATINIWEPNLKNPNGDFSLTQIWISAGSGSSLNTIEAGWQVYPGRTGDSQPRFFIYWTADGYTSTGCYDLTCPGFVQTNNYYAIGMALQPSVYGGQQYELNESIQRDPATGNWWLYLWGTVVGYWPASIYNSITNGADTVEWGGEIYDSSGTGGFHTTTQMGSGHFPTEGYGKASYVRDLQCVDTYGNVISPTANSFQGIAPAPNCYNYQFQQGSSELYLFYGGPGCQ</sequence>
<keyword id="KW-0002">3D-structure</keyword>
<keyword id="KW-0903">Direct protein sequencing</keyword>
<keyword id="KW-1015">Disulfide bond</keyword>
<keyword id="KW-0325">Glycoprotein</keyword>
<keyword id="KW-0378">Hydrolase</keyword>
<keyword id="KW-0645">Protease</keyword>
<keyword id="KW-0964">Secreted</keyword>
<keyword id="KW-0732">Signal</keyword>
<keyword id="KW-0865">Zymogen</keyword>